<protein>
    <recommendedName>
        <fullName evidence="1">Ribosomal RNA large subunit methyltransferase F</fullName>
        <ecNumber evidence="1">2.1.1.181</ecNumber>
    </recommendedName>
    <alternativeName>
        <fullName evidence="1">23S rRNA mA1618 methyltransferase</fullName>
    </alternativeName>
    <alternativeName>
        <fullName evidence="1">rRNA adenine N-6-methyltransferase</fullName>
    </alternativeName>
</protein>
<proteinExistence type="inferred from homology"/>
<evidence type="ECO:0000255" key="1">
    <source>
        <dbReference type="HAMAP-Rule" id="MF_01848"/>
    </source>
</evidence>
<evidence type="ECO:0000256" key="2">
    <source>
        <dbReference type="SAM" id="MobiDB-lite"/>
    </source>
</evidence>
<comment type="function">
    <text evidence="1">Specifically methylates the adenine in position 1618 of 23S rRNA.</text>
</comment>
<comment type="catalytic activity">
    <reaction evidence="1">
        <text>adenosine(1618) in 23S rRNA + S-adenosyl-L-methionine = N(6)-methyladenosine(1618) in 23S rRNA + S-adenosyl-L-homocysteine + H(+)</text>
        <dbReference type="Rhea" id="RHEA:16497"/>
        <dbReference type="Rhea" id="RHEA-COMP:10229"/>
        <dbReference type="Rhea" id="RHEA-COMP:10231"/>
        <dbReference type="ChEBI" id="CHEBI:15378"/>
        <dbReference type="ChEBI" id="CHEBI:57856"/>
        <dbReference type="ChEBI" id="CHEBI:59789"/>
        <dbReference type="ChEBI" id="CHEBI:74411"/>
        <dbReference type="ChEBI" id="CHEBI:74449"/>
        <dbReference type="EC" id="2.1.1.181"/>
    </reaction>
</comment>
<comment type="subcellular location">
    <subcellularLocation>
        <location evidence="1">Cytoplasm</location>
    </subcellularLocation>
</comment>
<comment type="similarity">
    <text evidence="1">Belongs to the methyltransferase superfamily. METTL16/RlmF family.</text>
</comment>
<sequence length="365" mass="40021">MSKPAVKSVPSATAKTATRAANPRQKAKAPKQAKPEGKGRAKPSKDKPRAEIKKALHPRNAHLNGYDFPALISAFPRLKTFVRPTPYGALSVNFADPLAVKTLNAALLKHHYGIGSWNIPEGALCPPIPGRVDYVHYVADLLAEGDKSCAMDKARVLDIGTGANGIYPILGCQVYGWQYVASDINAHSLANVQSIIEQNPVLQGRISLRLQPDDKAVFKGIIQAEERFELTLCNPPFHASMAEASEGTKRKVNNLQLNRGSSVKAAPKLNFGGQAAELWCQGGEGQFLATMIRESQMFADQCLWFTSLVSKQENLKPCYQALAQLNVDTVKTIEMQQGNKITRVLAWSFQSAAKRKLWRAEHLAR</sequence>
<organism>
    <name type="scientific">Shewanella baltica (strain OS195)</name>
    <dbReference type="NCBI Taxonomy" id="399599"/>
    <lineage>
        <taxon>Bacteria</taxon>
        <taxon>Pseudomonadati</taxon>
        <taxon>Pseudomonadota</taxon>
        <taxon>Gammaproteobacteria</taxon>
        <taxon>Alteromonadales</taxon>
        <taxon>Shewanellaceae</taxon>
        <taxon>Shewanella</taxon>
    </lineage>
</organism>
<dbReference type="EC" id="2.1.1.181" evidence="1"/>
<dbReference type="EMBL" id="CP000891">
    <property type="protein sequence ID" value="ABX47314.1"/>
    <property type="molecule type" value="Genomic_DNA"/>
</dbReference>
<dbReference type="RefSeq" id="WP_012196511.1">
    <property type="nucleotide sequence ID" value="NC_009997.1"/>
</dbReference>
<dbReference type="SMR" id="A9KVB0"/>
<dbReference type="GeneID" id="11770492"/>
<dbReference type="KEGG" id="sbn:Sbal195_0132"/>
<dbReference type="HOGENOM" id="CLU_027534_3_0_6"/>
<dbReference type="Proteomes" id="UP000000770">
    <property type="component" value="Chromosome"/>
</dbReference>
<dbReference type="GO" id="GO:0005737">
    <property type="term" value="C:cytoplasm"/>
    <property type="evidence" value="ECO:0007669"/>
    <property type="project" value="UniProtKB-SubCell"/>
</dbReference>
<dbReference type="GO" id="GO:0052907">
    <property type="term" value="F:23S rRNA (adenine(1618)-N(6))-methyltransferase activity"/>
    <property type="evidence" value="ECO:0007669"/>
    <property type="project" value="UniProtKB-EC"/>
</dbReference>
<dbReference type="GO" id="GO:0070475">
    <property type="term" value="P:rRNA base methylation"/>
    <property type="evidence" value="ECO:0007669"/>
    <property type="project" value="TreeGrafter"/>
</dbReference>
<dbReference type="CDD" id="cd02440">
    <property type="entry name" value="AdoMet_MTases"/>
    <property type="match status" value="1"/>
</dbReference>
<dbReference type="Gene3D" id="3.40.50.150">
    <property type="entry name" value="Vaccinia Virus protein VP39"/>
    <property type="match status" value="1"/>
</dbReference>
<dbReference type="HAMAP" id="MF_01848">
    <property type="entry name" value="23SrRNA_methyltr_F"/>
    <property type="match status" value="1"/>
</dbReference>
<dbReference type="InterPro" id="IPR010286">
    <property type="entry name" value="METTL16/RlmF"/>
</dbReference>
<dbReference type="InterPro" id="IPR016909">
    <property type="entry name" value="rRNA_lsu_MeTfrase_F"/>
</dbReference>
<dbReference type="InterPro" id="IPR029063">
    <property type="entry name" value="SAM-dependent_MTases_sf"/>
</dbReference>
<dbReference type="NCBIfam" id="NF008725">
    <property type="entry name" value="PRK11727.1"/>
    <property type="match status" value="1"/>
</dbReference>
<dbReference type="PANTHER" id="PTHR13393:SF0">
    <property type="entry name" value="RNA N6-ADENOSINE-METHYLTRANSFERASE METTL16"/>
    <property type="match status" value="1"/>
</dbReference>
<dbReference type="PANTHER" id="PTHR13393">
    <property type="entry name" value="SAM-DEPENDENT METHYLTRANSFERASE"/>
    <property type="match status" value="1"/>
</dbReference>
<dbReference type="Pfam" id="PF05971">
    <property type="entry name" value="Methyltransf_10"/>
    <property type="match status" value="1"/>
</dbReference>
<dbReference type="PIRSF" id="PIRSF029038">
    <property type="entry name" value="Mtase_YbiN_prd"/>
    <property type="match status" value="1"/>
</dbReference>
<dbReference type="SUPFAM" id="SSF53335">
    <property type="entry name" value="S-adenosyl-L-methionine-dependent methyltransferases"/>
    <property type="match status" value="1"/>
</dbReference>
<name>RLMF_SHEB9</name>
<reference key="1">
    <citation type="submission" date="2007-11" db="EMBL/GenBank/DDBJ databases">
        <title>Complete sequence of chromosome of Shewanella baltica OS195.</title>
        <authorList>
            <consortium name="US DOE Joint Genome Institute"/>
            <person name="Copeland A."/>
            <person name="Lucas S."/>
            <person name="Lapidus A."/>
            <person name="Barry K."/>
            <person name="Glavina del Rio T."/>
            <person name="Dalin E."/>
            <person name="Tice H."/>
            <person name="Pitluck S."/>
            <person name="Chain P."/>
            <person name="Malfatti S."/>
            <person name="Shin M."/>
            <person name="Vergez L."/>
            <person name="Schmutz J."/>
            <person name="Larimer F."/>
            <person name="Land M."/>
            <person name="Hauser L."/>
            <person name="Kyrpides N."/>
            <person name="Kim E."/>
            <person name="Brettar I."/>
            <person name="Rodrigues J."/>
            <person name="Konstantinidis K."/>
            <person name="Klappenbach J."/>
            <person name="Hofle M."/>
            <person name="Tiedje J."/>
            <person name="Richardson P."/>
        </authorList>
    </citation>
    <scope>NUCLEOTIDE SEQUENCE [LARGE SCALE GENOMIC DNA]</scope>
    <source>
        <strain>OS195</strain>
    </source>
</reference>
<feature type="chain" id="PRO_0000349953" description="Ribosomal RNA large subunit methyltransferase F">
    <location>
        <begin position="1"/>
        <end position="365"/>
    </location>
</feature>
<feature type="region of interest" description="Disordered" evidence="2">
    <location>
        <begin position="1"/>
        <end position="50"/>
    </location>
</feature>
<feature type="compositionally biased region" description="Basic and acidic residues" evidence="2">
    <location>
        <begin position="33"/>
        <end position="50"/>
    </location>
</feature>
<keyword id="KW-0963">Cytoplasm</keyword>
<keyword id="KW-0489">Methyltransferase</keyword>
<keyword id="KW-0698">rRNA processing</keyword>
<keyword id="KW-0949">S-adenosyl-L-methionine</keyword>
<keyword id="KW-0808">Transferase</keyword>
<gene>
    <name evidence="1" type="primary">rlmF</name>
    <name type="ordered locus">Sbal195_0132</name>
</gene>
<accession>A9KVB0</accession>